<keyword id="KW-1038">Host endoplasmic reticulum</keyword>
<keyword id="KW-1043">Host membrane</keyword>
<keyword id="KW-0472">Membrane</keyword>
<keyword id="KW-0812">Transmembrane</keyword>
<keyword id="KW-1133">Transmembrane helix</keyword>
<keyword id="KW-0813">Transport</keyword>
<keyword id="KW-0916">Viral movement protein</keyword>
<protein>
    <recommendedName>
        <fullName>Movement protein TGBp3</fullName>
    </recommendedName>
    <alternativeName>
        <fullName>7 kDa protein</fullName>
    </alternativeName>
    <alternativeName>
        <fullName>Triple gene block 3 protein</fullName>
        <shortName>TGBp3</shortName>
    </alternativeName>
</protein>
<reference key="1">
    <citation type="journal article" date="1988" name="Nucleic Acids Res.">
        <title>The nucleotide sequence of potato virus X RNA.</title>
        <authorList>
            <person name="Skryabin K.G."/>
            <person name="Kraev A.S."/>
            <person name="Morozov S.Y."/>
            <person name="Rozanov M.N."/>
            <person name="Chernov B.K."/>
            <person name="Lukasheva L.I."/>
            <person name="Atabekov J.G."/>
        </authorList>
    </citation>
    <scope>NUCLEOTIDE SEQUENCE [GENOMIC RNA]</scope>
</reference>
<reference key="2">
    <citation type="journal article" date="1987" name="FEBS Lett.">
        <title>Nucleotide sequence of the open reading frames adjacent to the coat protein cistron in potato virus X genome.</title>
        <authorList>
            <person name="Morozov S.Y."/>
            <person name="Lukasheva L.I."/>
            <person name="Chernov B.K."/>
            <person name="Skryabin K.G."/>
            <person name="Atabekov J.G."/>
        </authorList>
    </citation>
    <scope>NUCLEOTIDE SEQUENCE [GENOMIC RNA]</scope>
</reference>
<reference key="3">
    <citation type="journal article" date="2005" name="Mol. Plant Microbe Interact.">
        <title>A new cell-to-cell transport model for Potexviruses.</title>
        <authorList>
            <person name="Verchot-Lubicz J."/>
        </authorList>
    </citation>
    <scope>REVIEW</scope>
</reference>
<dbReference type="EMBL" id="M72416">
    <property type="protein sequence ID" value="AAA47170.1"/>
    <property type="molecule type" value="Genomic_RNA"/>
</dbReference>
<dbReference type="Proteomes" id="UP000006841">
    <property type="component" value="Genome"/>
</dbReference>
<dbReference type="GO" id="GO:0044167">
    <property type="term" value="C:host cell endoplasmic reticulum membrane"/>
    <property type="evidence" value="ECO:0007669"/>
    <property type="project" value="UniProtKB-SubCell"/>
</dbReference>
<dbReference type="GO" id="GO:0016020">
    <property type="term" value="C:membrane"/>
    <property type="evidence" value="ECO:0007669"/>
    <property type="project" value="UniProtKB-KW"/>
</dbReference>
<dbReference type="GO" id="GO:0046740">
    <property type="term" value="P:transport of virus in host, cell to cell"/>
    <property type="evidence" value="ECO:0007669"/>
    <property type="project" value="UniProtKB-KW"/>
</dbReference>
<dbReference type="InterPro" id="IPR003411">
    <property type="entry name" value="TGBp3"/>
</dbReference>
<dbReference type="Pfam" id="PF02495">
    <property type="entry name" value="TGBp3"/>
    <property type="match status" value="1"/>
</dbReference>
<name>TGB3_PVX</name>
<comment type="function">
    <text evidence="1">Plays a role in viral cell-to-cell propagation, by facilitating genome transport to neighboring plant cells through plasmosdesmata. May induce the formation of granular vesicles derived from the Endoplasmic reticulum, which align on actin filaments (By similarity).</text>
</comment>
<comment type="subcellular location">
    <subcellularLocation>
        <location evidence="1">Host endoplasmic reticulum membrane</location>
    </subcellularLocation>
</comment>
<comment type="miscellaneous">
    <text>TGBp1, TGBp2 and TGBp3 seem to act together for cell-to-cell propagation. TGBp1 is the main movement protein that physically cross the plasmodesma with the viral genome. TGBp2 and TGBp3 would facilitate TGBp1 function.</text>
</comment>
<comment type="similarity">
    <text evidence="3">Belongs to the Tymovirales TGBp3 protein family.</text>
</comment>
<organism>
    <name type="scientific">Potato virus X</name>
    <name type="common">PVX</name>
    <dbReference type="NCBI Taxonomy" id="12183"/>
    <lineage>
        <taxon>Viruses</taxon>
        <taxon>Riboviria</taxon>
        <taxon>Orthornavirae</taxon>
        <taxon>Kitrinoviricota</taxon>
        <taxon>Alsuviricetes</taxon>
        <taxon>Tymovirales</taxon>
        <taxon>Alphaflexiviridae</taxon>
        <taxon>Potexvirus</taxon>
    </lineage>
</organism>
<gene>
    <name type="ORF">ORF4</name>
</gene>
<evidence type="ECO:0000250" key="1"/>
<evidence type="ECO:0000255" key="2"/>
<evidence type="ECO:0000305" key="3"/>
<accession>P07698</accession>
<feature type="chain" id="PRO_0000222605" description="Movement protein TGBp3">
    <location>
        <begin position="1"/>
        <end position="70"/>
    </location>
</feature>
<feature type="topological domain" description="Lumenal" evidence="2">
    <location>
        <begin position="1"/>
        <end position="6"/>
    </location>
</feature>
<feature type="transmembrane region" description="Helical" evidence="2">
    <location>
        <begin position="7"/>
        <end position="27"/>
    </location>
</feature>
<feature type="topological domain" description="Cytoplasmic" evidence="2">
    <location>
        <begin position="28"/>
        <end position="70"/>
    </location>
</feature>
<proteinExistence type="inferred from homology"/>
<organismHost>
    <name type="scientific">Brassica campestris</name>
    <name type="common">Field mustard</name>
    <dbReference type="NCBI Taxonomy" id="3711"/>
</organismHost>
<organismHost>
    <name type="scientific">Solanum tuberosum</name>
    <name type="common">Potato</name>
    <dbReference type="NCBI Taxonomy" id="4113"/>
</organismHost>
<sequence length="70" mass="7595">MEANTYLNAIILVLVVTIIAVISTSLVRTEPCVIKITGESITVLACKLDAETIRAIADLKPLSVERLSFH</sequence>